<reference key="1">
    <citation type="journal article" date="1997" name="Nature">
        <title>The complete genome sequence of the hyperthermophilic, sulphate-reducing archaeon Archaeoglobus fulgidus.</title>
        <authorList>
            <person name="Klenk H.-P."/>
            <person name="Clayton R.A."/>
            <person name="Tomb J.-F."/>
            <person name="White O."/>
            <person name="Nelson K.E."/>
            <person name="Ketchum K.A."/>
            <person name="Dodson R.J."/>
            <person name="Gwinn M.L."/>
            <person name="Hickey E.K."/>
            <person name="Peterson J.D."/>
            <person name="Richardson D.L."/>
            <person name="Kerlavage A.R."/>
            <person name="Graham D.E."/>
            <person name="Kyrpides N.C."/>
            <person name="Fleischmann R.D."/>
            <person name="Quackenbush J."/>
            <person name="Lee N.H."/>
            <person name="Sutton G.G."/>
            <person name="Gill S.R."/>
            <person name="Kirkness E.F."/>
            <person name="Dougherty B.A."/>
            <person name="McKenney K."/>
            <person name="Adams M.D."/>
            <person name="Loftus B.J."/>
            <person name="Peterson S.N."/>
            <person name="Reich C.I."/>
            <person name="McNeil L.K."/>
            <person name="Badger J.H."/>
            <person name="Glodek A."/>
            <person name="Zhou L."/>
            <person name="Overbeek R."/>
            <person name="Gocayne J.D."/>
            <person name="Weidman J.F."/>
            <person name="McDonald L.A."/>
            <person name="Utterback T.R."/>
            <person name="Cotton M.D."/>
            <person name="Spriggs T."/>
            <person name="Artiach P."/>
            <person name="Kaine B.P."/>
            <person name="Sykes S.M."/>
            <person name="Sadow P.W."/>
            <person name="D'Andrea K.P."/>
            <person name="Bowman C."/>
            <person name="Fujii C."/>
            <person name="Garland S.A."/>
            <person name="Mason T.M."/>
            <person name="Olsen G.J."/>
            <person name="Fraser C.M."/>
            <person name="Smith H.O."/>
            <person name="Woese C.R."/>
            <person name="Venter J.C."/>
        </authorList>
    </citation>
    <scope>NUCLEOTIDE SEQUENCE [LARGE SCALE GENOMIC DNA]</scope>
    <source>
        <strain>ATCC 49558 / DSM 4304 / JCM 9628 / NBRC 100126 / VC-16</strain>
    </source>
</reference>
<organism>
    <name type="scientific">Archaeoglobus fulgidus (strain ATCC 49558 / DSM 4304 / JCM 9628 / NBRC 100126 / VC-16)</name>
    <dbReference type="NCBI Taxonomy" id="224325"/>
    <lineage>
        <taxon>Archaea</taxon>
        <taxon>Methanobacteriati</taxon>
        <taxon>Methanobacteriota</taxon>
        <taxon>Archaeoglobi</taxon>
        <taxon>Archaeoglobales</taxon>
        <taxon>Archaeoglobaceae</taxon>
        <taxon>Archaeoglobus</taxon>
    </lineage>
</organism>
<proteinExistence type="inferred from homology"/>
<keyword id="KW-0067">ATP-binding</keyword>
<keyword id="KW-0436">Ligase</keyword>
<keyword id="KW-0479">Metal-binding</keyword>
<keyword id="KW-0547">Nucleotide-binding</keyword>
<keyword id="KW-1185">Reference proteome</keyword>
<keyword id="KW-0862">Zinc</keyword>
<name>QUEC_ARCFU</name>
<protein>
    <recommendedName>
        <fullName evidence="1">7-cyano-7-deazaguanine synthase</fullName>
        <ecNumber evidence="1">6.3.4.20</ecNumber>
    </recommendedName>
    <alternativeName>
        <fullName evidence="1">7-cyano-7-carbaguanine synthase</fullName>
    </alternativeName>
    <alternativeName>
        <fullName evidence="1">Archaeosine biosynthesis protein QueC</fullName>
    </alternativeName>
    <alternativeName>
        <fullName evidence="1">PreQ(0) synthase</fullName>
    </alternativeName>
</protein>
<gene>
    <name evidence="1" type="primary">queC</name>
    <name type="ordered locus">AF_0442</name>
</gene>
<accession>O29807</accession>
<comment type="function">
    <text evidence="1">Catalyzes the ATP-dependent conversion of 7-carboxy-7-deazaguanine (CDG) to 7-cyano-7-deazaguanine (preQ(0)).</text>
</comment>
<comment type="catalytic activity">
    <reaction evidence="1">
        <text>7-carboxy-7-deazaguanine + NH4(+) + ATP = 7-cyano-7-deazaguanine + ADP + phosphate + H2O + H(+)</text>
        <dbReference type="Rhea" id="RHEA:27982"/>
        <dbReference type="ChEBI" id="CHEBI:15377"/>
        <dbReference type="ChEBI" id="CHEBI:15378"/>
        <dbReference type="ChEBI" id="CHEBI:28938"/>
        <dbReference type="ChEBI" id="CHEBI:30616"/>
        <dbReference type="ChEBI" id="CHEBI:43474"/>
        <dbReference type="ChEBI" id="CHEBI:45075"/>
        <dbReference type="ChEBI" id="CHEBI:61036"/>
        <dbReference type="ChEBI" id="CHEBI:456216"/>
        <dbReference type="EC" id="6.3.4.20"/>
    </reaction>
</comment>
<comment type="cofactor">
    <cofactor evidence="1">
        <name>Zn(2+)</name>
        <dbReference type="ChEBI" id="CHEBI:29105"/>
    </cofactor>
    <text evidence="1">Binds 1 zinc ion per subunit.</text>
</comment>
<comment type="pathway">
    <text evidence="1">Purine metabolism; 7-cyano-7-deazaguanine biosynthesis.</text>
</comment>
<comment type="similarity">
    <text evidence="1">Belongs to the QueC family.</text>
</comment>
<evidence type="ECO:0000255" key="1">
    <source>
        <dbReference type="HAMAP-Rule" id="MF_01633"/>
    </source>
</evidence>
<dbReference type="EC" id="6.3.4.20" evidence="1"/>
<dbReference type="EMBL" id="AE000782">
    <property type="protein sequence ID" value="AAB90792.1"/>
    <property type="molecule type" value="Genomic_DNA"/>
</dbReference>
<dbReference type="PIR" id="B69305">
    <property type="entry name" value="B69305"/>
</dbReference>
<dbReference type="RefSeq" id="WP_010877949.1">
    <property type="nucleotide sequence ID" value="NC_000917.1"/>
</dbReference>
<dbReference type="SMR" id="O29807"/>
<dbReference type="STRING" id="224325.AF_0442"/>
<dbReference type="PaxDb" id="224325-AF_0442"/>
<dbReference type="EnsemblBacteria" id="AAB90792">
    <property type="protein sequence ID" value="AAB90792"/>
    <property type="gene ID" value="AF_0442"/>
</dbReference>
<dbReference type="GeneID" id="24793979"/>
<dbReference type="KEGG" id="afu:AF_0442"/>
<dbReference type="eggNOG" id="arCOG00039">
    <property type="taxonomic scope" value="Archaea"/>
</dbReference>
<dbReference type="HOGENOM" id="CLU_081854_1_0_2"/>
<dbReference type="OrthoDB" id="6532at2157"/>
<dbReference type="PhylomeDB" id="O29807"/>
<dbReference type="UniPathway" id="UPA00391"/>
<dbReference type="Proteomes" id="UP000002199">
    <property type="component" value="Chromosome"/>
</dbReference>
<dbReference type="GO" id="GO:0005524">
    <property type="term" value="F:ATP binding"/>
    <property type="evidence" value="ECO:0007669"/>
    <property type="project" value="UniProtKB-UniRule"/>
</dbReference>
<dbReference type="GO" id="GO:0016879">
    <property type="term" value="F:ligase activity, forming carbon-nitrogen bonds"/>
    <property type="evidence" value="ECO:0007669"/>
    <property type="project" value="UniProtKB-UniRule"/>
</dbReference>
<dbReference type="GO" id="GO:0008270">
    <property type="term" value="F:zinc ion binding"/>
    <property type="evidence" value="ECO:0007669"/>
    <property type="project" value="UniProtKB-UniRule"/>
</dbReference>
<dbReference type="CDD" id="cd01995">
    <property type="entry name" value="QueC-like"/>
    <property type="match status" value="1"/>
</dbReference>
<dbReference type="Gene3D" id="3.40.50.620">
    <property type="entry name" value="HUPs"/>
    <property type="match status" value="1"/>
</dbReference>
<dbReference type="HAMAP" id="MF_01633">
    <property type="entry name" value="QueC"/>
    <property type="match status" value="1"/>
</dbReference>
<dbReference type="InterPro" id="IPR018317">
    <property type="entry name" value="QueC"/>
</dbReference>
<dbReference type="InterPro" id="IPR014729">
    <property type="entry name" value="Rossmann-like_a/b/a_fold"/>
</dbReference>
<dbReference type="NCBIfam" id="TIGR00364">
    <property type="entry name" value="7-cyano-7-deazaguanine synthase QueC"/>
    <property type="match status" value="1"/>
</dbReference>
<dbReference type="PANTHER" id="PTHR42914">
    <property type="entry name" value="7-CYANO-7-DEAZAGUANINE SYNTHASE"/>
    <property type="match status" value="1"/>
</dbReference>
<dbReference type="PANTHER" id="PTHR42914:SF1">
    <property type="entry name" value="7-CYANO-7-DEAZAGUANINE SYNTHASE"/>
    <property type="match status" value="1"/>
</dbReference>
<dbReference type="Pfam" id="PF06508">
    <property type="entry name" value="QueC"/>
    <property type="match status" value="1"/>
</dbReference>
<dbReference type="PIRSF" id="PIRSF006293">
    <property type="entry name" value="ExsB"/>
    <property type="match status" value="1"/>
</dbReference>
<dbReference type="SUPFAM" id="SSF52402">
    <property type="entry name" value="Adenine nucleotide alpha hydrolases-like"/>
    <property type="match status" value="1"/>
</dbReference>
<feature type="chain" id="PRO_0000246973" description="7-cyano-7-deazaguanine synthase">
    <location>
        <begin position="1"/>
        <end position="239"/>
    </location>
</feature>
<feature type="binding site" evidence="1">
    <location>
        <begin position="7"/>
        <end position="17"/>
    </location>
    <ligand>
        <name>ATP</name>
        <dbReference type="ChEBI" id="CHEBI:30616"/>
    </ligand>
</feature>
<feature type="binding site" evidence="1">
    <location>
        <position position="184"/>
    </location>
    <ligand>
        <name>Zn(2+)</name>
        <dbReference type="ChEBI" id="CHEBI:29105"/>
    </ligand>
</feature>
<feature type="binding site" evidence="1">
    <location>
        <position position="192"/>
    </location>
    <ligand>
        <name>Zn(2+)</name>
        <dbReference type="ChEBI" id="CHEBI:29105"/>
    </ligand>
</feature>
<feature type="binding site" evidence="1">
    <location>
        <position position="195"/>
    </location>
    <ligand>
        <name>Zn(2+)</name>
        <dbReference type="ChEBI" id="CHEBI:29105"/>
    </ligand>
</feature>
<feature type="binding site" evidence="1">
    <location>
        <position position="198"/>
    </location>
    <ligand>
        <name>Zn(2+)</name>
        <dbReference type="ChEBI" id="CHEBI:29105"/>
    </ligand>
</feature>
<sequence length="239" mass="26726">MKAVMLLSGGIDSSTLLYYLLDGGYEVHALTFFYGQKHSKEIESAEKVAKAAKVRHLKVDISTIHDLISYGALTGEEEVPKAFYSEEVQRRTIVPNRNMILLSIAAGYAVKIGAKEVHYAAHLSDYSIYPDCRKEFVKALDTAVYLANIWTPVEVRAPFVDMTKADIVRLGLKLGVPYELTWSCYEGGDRPCLSCGTCLERTEAFLANGVKDPLLSDEEWKNAVKIYEEMRARNEGKSD</sequence>